<keyword id="KW-0004">4Fe-4S</keyword>
<keyword id="KW-0408">Iron</keyword>
<keyword id="KW-0411">Iron-sulfur</keyword>
<keyword id="KW-0479">Metal-binding</keyword>
<gene>
    <name evidence="1" type="primary">nfuA</name>
    <name type="ordered locus">KPK_0331</name>
</gene>
<dbReference type="EMBL" id="CP000964">
    <property type="protein sequence ID" value="ACI07757.1"/>
    <property type="molecule type" value="Genomic_DNA"/>
</dbReference>
<dbReference type="SMR" id="B5XTS2"/>
<dbReference type="KEGG" id="kpe:KPK_0331"/>
<dbReference type="HOGENOM" id="CLU_094569_0_0_6"/>
<dbReference type="Proteomes" id="UP000001734">
    <property type="component" value="Chromosome"/>
</dbReference>
<dbReference type="GO" id="GO:0051539">
    <property type="term" value="F:4 iron, 4 sulfur cluster binding"/>
    <property type="evidence" value="ECO:0007669"/>
    <property type="project" value="UniProtKB-UniRule"/>
</dbReference>
<dbReference type="GO" id="GO:0005506">
    <property type="term" value="F:iron ion binding"/>
    <property type="evidence" value="ECO:0007669"/>
    <property type="project" value="InterPro"/>
</dbReference>
<dbReference type="GO" id="GO:0016226">
    <property type="term" value="P:iron-sulfur cluster assembly"/>
    <property type="evidence" value="ECO:0007669"/>
    <property type="project" value="UniProtKB-UniRule"/>
</dbReference>
<dbReference type="GO" id="GO:0051604">
    <property type="term" value="P:protein maturation"/>
    <property type="evidence" value="ECO:0007669"/>
    <property type="project" value="UniProtKB-UniRule"/>
</dbReference>
<dbReference type="FunFam" id="2.60.300.12:FF:000004">
    <property type="entry name" value="Fe/S biogenesis protein NfuA"/>
    <property type="match status" value="1"/>
</dbReference>
<dbReference type="FunFam" id="3.30.300.130:FF:000002">
    <property type="entry name" value="Fe/S biogenesis protein NfuA"/>
    <property type="match status" value="1"/>
</dbReference>
<dbReference type="Gene3D" id="3.30.300.130">
    <property type="entry name" value="Fe-S cluster assembly (FSCA)"/>
    <property type="match status" value="1"/>
</dbReference>
<dbReference type="Gene3D" id="2.60.300.12">
    <property type="entry name" value="HesB-like domain"/>
    <property type="match status" value="1"/>
</dbReference>
<dbReference type="HAMAP" id="MF_01637">
    <property type="entry name" value="Fe_S_biogen_NfuA"/>
    <property type="match status" value="1"/>
</dbReference>
<dbReference type="InterPro" id="IPR017726">
    <property type="entry name" value="Fe/S_biogenesis_protein_NfuA"/>
</dbReference>
<dbReference type="InterPro" id="IPR000361">
    <property type="entry name" value="FeS_biogenesis"/>
</dbReference>
<dbReference type="InterPro" id="IPR034904">
    <property type="entry name" value="FSCA_dom_sf"/>
</dbReference>
<dbReference type="InterPro" id="IPR035903">
    <property type="entry name" value="HesB-like_dom_sf"/>
</dbReference>
<dbReference type="InterPro" id="IPR001075">
    <property type="entry name" value="NIF_FeS_clus_asmbl_NifU_C"/>
</dbReference>
<dbReference type="NCBIfam" id="NF008392">
    <property type="entry name" value="PRK11190.1"/>
    <property type="match status" value="1"/>
</dbReference>
<dbReference type="NCBIfam" id="TIGR03341">
    <property type="entry name" value="YhgI_GntY"/>
    <property type="match status" value="1"/>
</dbReference>
<dbReference type="PANTHER" id="PTHR11178:SF51">
    <property type="entry name" value="FE_S BIOGENESIS PROTEIN NFUA"/>
    <property type="match status" value="1"/>
</dbReference>
<dbReference type="PANTHER" id="PTHR11178">
    <property type="entry name" value="IRON-SULFUR CLUSTER SCAFFOLD PROTEIN NFU-RELATED"/>
    <property type="match status" value="1"/>
</dbReference>
<dbReference type="Pfam" id="PF01521">
    <property type="entry name" value="Fe-S_biosyn"/>
    <property type="match status" value="1"/>
</dbReference>
<dbReference type="Pfam" id="PF01106">
    <property type="entry name" value="NifU"/>
    <property type="match status" value="1"/>
</dbReference>
<dbReference type="SUPFAM" id="SSF117916">
    <property type="entry name" value="Fe-S cluster assembly (FSCA) domain-like"/>
    <property type="match status" value="1"/>
</dbReference>
<dbReference type="SUPFAM" id="SSF89360">
    <property type="entry name" value="HesB-like domain"/>
    <property type="match status" value="1"/>
</dbReference>
<proteinExistence type="inferred from homology"/>
<feature type="chain" id="PRO_1000186755" description="Fe/S biogenesis protein NfuA">
    <location>
        <begin position="1"/>
        <end position="191"/>
    </location>
</feature>
<feature type="binding site" evidence="1">
    <location>
        <position position="149"/>
    </location>
    <ligand>
        <name>[4Fe-4S] cluster</name>
        <dbReference type="ChEBI" id="CHEBI:49883"/>
    </ligand>
</feature>
<feature type="binding site" evidence="1">
    <location>
        <position position="152"/>
    </location>
    <ligand>
        <name>[4Fe-4S] cluster</name>
        <dbReference type="ChEBI" id="CHEBI:49883"/>
    </ligand>
</feature>
<protein>
    <recommendedName>
        <fullName evidence="1">Fe/S biogenesis protein NfuA</fullName>
    </recommendedName>
</protein>
<comment type="function">
    <text evidence="1">Involved in iron-sulfur cluster biogenesis. Binds a 4Fe-4S cluster, can transfer this cluster to apoproteins, and thereby intervenes in the maturation of Fe/S proteins. Could also act as a scaffold/chaperone for damaged Fe/S proteins.</text>
</comment>
<comment type="cofactor">
    <cofactor evidence="1">
        <name>[4Fe-4S] cluster</name>
        <dbReference type="ChEBI" id="CHEBI:49883"/>
    </cofactor>
    <text evidence="1">Binds 1 [4Fe-4S] cluster per subunit. The cluster is presumably bound at the interface of two monomers.</text>
</comment>
<comment type="subunit">
    <text evidence="1">Homodimer.</text>
</comment>
<comment type="similarity">
    <text evidence="1">Belongs to the NfuA family.</text>
</comment>
<accession>B5XTS2</accession>
<sequence length="191" mass="21005">MIRISDAAQAHFAKLLANQEEGTQIRVFVINPGTPNAECGVSYCPPDAVEDTDTALKFEQLTAYVDELSAPYLEDAEIDFVTDQLGSQLTLKAPNAKMRKVSDDAPLMERVEYLLQSQINPQLAGHGGRVSLMEITDDGLAILQFGGGCNGCSMVDVTLKEGIEKQLLNEFPELKGVRDLTEHQRGEHSYY</sequence>
<organism>
    <name type="scientific">Klebsiella pneumoniae (strain 342)</name>
    <dbReference type="NCBI Taxonomy" id="507522"/>
    <lineage>
        <taxon>Bacteria</taxon>
        <taxon>Pseudomonadati</taxon>
        <taxon>Pseudomonadota</taxon>
        <taxon>Gammaproteobacteria</taxon>
        <taxon>Enterobacterales</taxon>
        <taxon>Enterobacteriaceae</taxon>
        <taxon>Klebsiella/Raoultella group</taxon>
        <taxon>Klebsiella</taxon>
        <taxon>Klebsiella pneumoniae complex</taxon>
    </lineage>
</organism>
<reference key="1">
    <citation type="journal article" date="2008" name="PLoS Genet.">
        <title>Complete genome sequence of the N2-fixing broad host range endophyte Klebsiella pneumoniae 342 and virulence predictions verified in mice.</title>
        <authorList>
            <person name="Fouts D.E."/>
            <person name="Tyler H.L."/>
            <person name="DeBoy R.T."/>
            <person name="Daugherty S."/>
            <person name="Ren Q."/>
            <person name="Badger J.H."/>
            <person name="Durkin A.S."/>
            <person name="Huot H."/>
            <person name="Shrivastava S."/>
            <person name="Kothari S."/>
            <person name="Dodson R.J."/>
            <person name="Mohamoud Y."/>
            <person name="Khouri H."/>
            <person name="Roesch L.F.W."/>
            <person name="Krogfelt K.A."/>
            <person name="Struve C."/>
            <person name="Triplett E.W."/>
            <person name="Methe B.A."/>
        </authorList>
    </citation>
    <scope>NUCLEOTIDE SEQUENCE [LARGE SCALE GENOMIC DNA]</scope>
    <source>
        <strain>342</strain>
    </source>
</reference>
<evidence type="ECO:0000255" key="1">
    <source>
        <dbReference type="HAMAP-Rule" id="MF_01637"/>
    </source>
</evidence>
<name>NFUA_KLEP3</name>